<proteinExistence type="inferred from homology"/>
<protein>
    <recommendedName>
        <fullName evidence="1">Large ribosomal subunit protein eL34</fullName>
    </recommendedName>
    <alternativeName>
        <fullName evidence="2">50S ribosomal protein L34e</fullName>
    </alternativeName>
</protein>
<keyword id="KW-0687">Ribonucleoprotein</keyword>
<keyword id="KW-0689">Ribosomal protein</keyword>
<evidence type="ECO:0000255" key="1">
    <source>
        <dbReference type="HAMAP-Rule" id="MF_00349"/>
    </source>
</evidence>
<evidence type="ECO:0000305" key="2"/>
<name>RL34_SACI4</name>
<organism>
    <name type="scientific">Saccharolobus islandicus (strain M.14.25 / Kamchatka #1)</name>
    <name type="common">Sulfolobus islandicus</name>
    <dbReference type="NCBI Taxonomy" id="427317"/>
    <lineage>
        <taxon>Archaea</taxon>
        <taxon>Thermoproteota</taxon>
        <taxon>Thermoprotei</taxon>
        <taxon>Sulfolobales</taxon>
        <taxon>Sulfolobaceae</taxon>
        <taxon>Saccharolobus</taxon>
    </lineage>
</organism>
<reference key="1">
    <citation type="journal article" date="2009" name="Proc. Natl. Acad. Sci. U.S.A.">
        <title>Biogeography of the Sulfolobus islandicus pan-genome.</title>
        <authorList>
            <person name="Reno M.L."/>
            <person name="Held N.L."/>
            <person name="Fields C.J."/>
            <person name="Burke P.V."/>
            <person name="Whitaker R.J."/>
        </authorList>
    </citation>
    <scope>NUCLEOTIDE SEQUENCE [LARGE SCALE GENOMIC DNA]</scope>
    <source>
        <strain>M.14.25 / Kamchatka #1</strain>
    </source>
</reference>
<feature type="chain" id="PRO_1000205334" description="Large ribosomal subunit protein eL34">
    <location>
        <begin position="1"/>
        <end position="85"/>
    </location>
</feature>
<accession>C3MVX7</accession>
<sequence length="85" mass="9814">MPRPALRSRSLRRIYVKLPSGKTAIHYERKKNDIPKCAMCKKPLHGVKTNFLHKYGKSEKRPERPFGGYLCSSCLAQLIKAMVRQ</sequence>
<comment type="similarity">
    <text evidence="1">Belongs to the eukaryotic ribosomal protein eL34 family.</text>
</comment>
<dbReference type="EMBL" id="CP001400">
    <property type="protein sequence ID" value="ACP38199.1"/>
    <property type="molecule type" value="Genomic_DNA"/>
</dbReference>
<dbReference type="RefSeq" id="WP_012711444.1">
    <property type="nucleotide sequence ID" value="NC_012588.1"/>
</dbReference>
<dbReference type="SMR" id="C3MVX7"/>
<dbReference type="KEGG" id="sia:M1425_1446"/>
<dbReference type="HOGENOM" id="CLU_118652_2_0_2"/>
<dbReference type="Proteomes" id="UP000001350">
    <property type="component" value="Chromosome"/>
</dbReference>
<dbReference type="GO" id="GO:1990904">
    <property type="term" value="C:ribonucleoprotein complex"/>
    <property type="evidence" value="ECO:0007669"/>
    <property type="project" value="UniProtKB-KW"/>
</dbReference>
<dbReference type="GO" id="GO:0005840">
    <property type="term" value="C:ribosome"/>
    <property type="evidence" value="ECO:0007669"/>
    <property type="project" value="UniProtKB-KW"/>
</dbReference>
<dbReference type="GO" id="GO:0003735">
    <property type="term" value="F:structural constituent of ribosome"/>
    <property type="evidence" value="ECO:0007669"/>
    <property type="project" value="InterPro"/>
</dbReference>
<dbReference type="GO" id="GO:0006412">
    <property type="term" value="P:translation"/>
    <property type="evidence" value="ECO:0007669"/>
    <property type="project" value="UniProtKB-UniRule"/>
</dbReference>
<dbReference type="Gene3D" id="6.20.340.10">
    <property type="match status" value="1"/>
</dbReference>
<dbReference type="HAMAP" id="MF_00349">
    <property type="entry name" value="Ribosomal_eL34"/>
    <property type="match status" value="1"/>
</dbReference>
<dbReference type="InterPro" id="IPR008195">
    <property type="entry name" value="Ribosomal_eL34"/>
</dbReference>
<dbReference type="InterPro" id="IPR038562">
    <property type="entry name" value="Ribosomal_eL34_C_sf"/>
</dbReference>
<dbReference type="InterPro" id="IPR018065">
    <property type="entry name" value="Ribosomal_eL34_CS"/>
</dbReference>
<dbReference type="InterPro" id="IPR047868">
    <property type="entry name" value="Ribosomal_L34e_arc-type"/>
</dbReference>
<dbReference type="NCBIfam" id="NF003143">
    <property type="entry name" value="PRK04059.1"/>
    <property type="match status" value="1"/>
</dbReference>
<dbReference type="Pfam" id="PF01199">
    <property type="entry name" value="Ribosomal_L34e"/>
    <property type="match status" value="1"/>
</dbReference>
<dbReference type="PRINTS" id="PR01250">
    <property type="entry name" value="RIBOSOMALL34"/>
</dbReference>
<dbReference type="PROSITE" id="PS01145">
    <property type="entry name" value="RIBOSOMAL_L34E"/>
    <property type="match status" value="1"/>
</dbReference>
<gene>
    <name evidence="1" type="primary">rpl34e</name>
    <name type="ordered locus">M1425_1446</name>
</gene>